<reference key="1">
    <citation type="journal article" date="2002" name="Genome Res.">
        <title>A complete sequence of the T. tengcongensis genome.</title>
        <authorList>
            <person name="Bao Q."/>
            <person name="Tian Y."/>
            <person name="Li W."/>
            <person name="Xu Z."/>
            <person name="Xuan Z."/>
            <person name="Hu S."/>
            <person name="Dong W."/>
            <person name="Yang J."/>
            <person name="Chen Y."/>
            <person name="Xue Y."/>
            <person name="Xu Y."/>
            <person name="Lai X."/>
            <person name="Huang L."/>
            <person name="Dong X."/>
            <person name="Ma Y."/>
            <person name="Ling L."/>
            <person name="Tan H."/>
            <person name="Chen R."/>
            <person name="Wang J."/>
            <person name="Yu J."/>
            <person name="Yang H."/>
        </authorList>
    </citation>
    <scope>NUCLEOTIDE SEQUENCE [LARGE SCALE GENOMIC DNA]</scope>
    <source>
        <strain>DSM 15242 / JCM 11007 / NBRC 100824 / MB4</strain>
    </source>
</reference>
<feature type="chain" id="PRO_0000068633" description="Uncharacterized HTH-type transcriptional regulator TTE0211">
    <location>
        <begin position="1"/>
        <end position="282"/>
    </location>
</feature>
<feature type="domain" description="HTH rpiR-type" evidence="1">
    <location>
        <begin position="2"/>
        <end position="78"/>
    </location>
</feature>
<feature type="domain" description="SIS" evidence="2">
    <location>
        <begin position="122"/>
        <end position="262"/>
    </location>
</feature>
<feature type="DNA-binding region" description="H-T-H motif" evidence="1">
    <location>
        <begin position="38"/>
        <end position="57"/>
    </location>
</feature>
<name>Y211_CALS4</name>
<evidence type="ECO:0000255" key="1">
    <source>
        <dbReference type="PROSITE-ProRule" id="PRU00390"/>
    </source>
</evidence>
<evidence type="ECO:0000255" key="2">
    <source>
        <dbReference type="PROSITE-ProRule" id="PRU00797"/>
    </source>
</evidence>
<keyword id="KW-0238">DNA-binding</keyword>
<keyword id="KW-1185">Reference proteome</keyword>
<keyword id="KW-0804">Transcription</keyword>
<keyword id="KW-0805">Transcription regulation</keyword>
<protein>
    <recommendedName>
        <fullName>Uncharacterized HTH-type transcriptional regulator TTE0211</fullName>
    </recommendedName>
</protein>
<proteinExistence type="predicted"/>
<accession>Q8RD36</accession>
<gene>
    <name type="ordered locus">TTE0211</name>
</gene>
<sequence>MTDVLAVIREMSSSFTPSEAKIAKYILENPTVVTELSVNELANACDTSEASIIRFCRTIGLKGFQELKIKIAVSLAKQTRKLDGGITSEDDVMAVIQKIANFNKQAIDSTIAVLNAEELTKAAEALANANKIDFYGVAASGVVAYDAMLKFSRINIPCTAYQDTHLQLTSAVNLKKGDVAFGISYSGATKEIVEAIQTAKEAGATTISLTKYGQSPLAKAADINLFVSSEEAMFRAGAMASRIAQLTVIDILFILVAQKKYNDVVRYLENTSEVLSMRKINN</sequence>
<organism>
    <name type="scientific">Caldanaerobacter subterraneus subsp. tengcongensis (strain DSM 15242 / JCM 11007 / NBRC 100824 / MB4)</name>
    <name type="common">Thermoanaerobacter tengcongensis</name>
    <dbReference type="NCBI Taxonomy" id="273068"/>
    <lineage>
        <taxon>Bacteria</taxon>
        <taxon>Bacillati</taxon>
        <taxon>Bacillota</taxon>
        <taxon>Clostridia</taxon>
        <taxon>Thermoanaerobacterales</taxon>
        <taxon>Thermoanaerobacteraceae</taxon>
        <taxon>Caldanaerobacter</taxon>
    </lineage>
</organism>
<dbReference type="EMBL" id="AE008691">
    <property type="protein sequence ID" value="AAM23512.1"/>
    <property type="molecule type" value="Genomic_DNA"/>
</dbReference>
<dbReference type="RefSeq" id="WP_009609656.1">
    <property type="nucleotide sequence ID" value="NZ_JANUCV010000001.1"/>
</dbReference>
<dbReference type="SMR" id="Q8RD36"/>
<dbReference type="STRING" id="273068.TTE0211"/>
<dbReference type="KEGG" id="tte:TTE0211"/>
<dbReference type="eggNOG" id="COG1737">
    <property type="taxonomic scope" value="Bacteria"/>
</dbReference>
<dbReference type="HOGENOM" id="CLU_055769_0_0_9"/>
<dbReference type="OrthoDB" id="3684496at2"/>
<dbReference type="Proteomes" id="UP000000555">
    <property type="component" value="Chromosome"/>
</dbReference>
<dbReference type="GO" id="GO:0097367">
    <property type="term" value="F:carbohydrate derivative binding"/>
    <property type="evidence" value="ECO:0007669"/>
    <property type="project" value="InterPro"/>
</dbReference>
<dbReference type="GO" id="GO:0003677">
    <property type="term" value="F:DNA binding"/>
    <property type="evidence" value="ECO:0007669"/>
    <property type="project" value="UniProtKB-KW"/>
</dbReference>
<dbReference type="GO" id="GO:0003700">
    <property type="term" value="F:DNA-binding transcription factor activity"/>
    <property type="evidence" value="ECO:0007669"/>
    <property type="project" value="InterPro"/>
</dbReference>
<dbReference type="GO" id="GO:1901135">
    <property type="term" value="P:carbohydrate derivative metabolic process"/>
    <property type="evidence" value="ECO:0007669"/>
    <property type="project" value="InterPro"/>
</dbReference>
<dbReference type="CDD" id="cd05013">
    <property type="entry name" value="SIS_RpiR"/>
    <property type="match status" value="1"/>
</dbReference>
<dbReference type="Gene3D" id="3.40.50.10490">
    <property type="entry name" value="Glucose-6-phosphate isomerase like protein, domain 1"/>
    <property type="match status" value="1"/>
</dbReference>
<dbReference type="Gene3D" id="1.10.10.10">
    <property type="entry name" value="Winged helix-like DNA-binding domain superfamily/Winged helix DNA-binding domain"/>
    <property type="match status" value="1"/>
</dbReference>
<dbReference type="InterPro" id="IPR009057">
    <property type="entry name" value="Homeodomain-like_sf"/>
</dbReference>
<dbReference type="InterPro" id="IPR000281">
    <property type="entry name" value="HTH_RpiR"/>
</dbReference>
<dbReference type="InterPro" id="IPR047640">
    <property type="entry name" value="RpiR-like"/>
</dbReference>
<dbReference type="InterPro" id="IPR035472">
    <property type="entry name" value="RpiR-like_SIS"/>
</dbReference>
<dbReference type="InterPro" id="IPR001347">
    <property type="entry name" value="SIS_dom"/>
</dbReference>
<dbReference type="InterPro" id="IPR046348">
    <property type="entry name" value="SIS_dom_sf"/>
</dbReference>
<dbReference type="InterPro" id="IPR036388">
    <property type="entry name" value="WH-like_DNA-bd_sf"/>
</dbReference>
<dbReference type="PANTHER" id="PTHR30514">
    <property type="entry name" value="GLUCOKINASE"/>
    <property type="match status" value="1"/>
</dbReference>
<dbReference type="PANTHER" id="PTHR30514:SF1">
    <property type="entry name" value="HTH-TYPE TRANSCRIPTIONAL REGULATOR HEXR-RELATED"/>
    <property type="match status" value="1"/>
</dbReference>
<dbReference type="Pfam" id="PF01418">
    <property type="entry name" value="HTH_6"/>
    <property type="match status" value="1"/>
</dbReference>
<dbReference type="Pfam" id="PF01380">
    <property type="entry name" value="SIS"/>
    <property type="match status" value="1"/>
</dbReference>
<dbReference type="SUPFAM" id="SSF46689">
    <property type="entry name" value="Homeodomain-like"/>
    <property type="match status" value="1"/>
</dbReference>
<dbReference type="SUPFAM" id="SSF53697">
    <property type="entry name" value="SIS domain"/>
    <property type="match status" value="1"/>
</dbReference>
<dbReference type="PROSITE" id="PS51071">
    <property type="entry name" value="HTH_RPIR"/>
    <property type="match status" value="1"/>
</dbReference>
<dbReference type="PROSITE" id="PS51464">
    <property type="entry name" value="SIS"/>
    <property type="match status" value="1"/>
</dbReference>